<comment type="function">
    <text>Proteoglycan that seems to be implicated in diverse developmental roles such as differentiation, cell-cell recognition, embryogenesis and programmed cell death.</text>
</comment>
<comment type="subcellular location">
    <subcellularLocation>
        <location evidence="6">Cell membrane</location>
        <topology evidence="6">Lipid-anchor</topology>
        <topology evidence="6">GPI-anchor</topology>
    </subcellularLocation>
</comment>
<comment type="tissue specificity">
    <text evidence="4 5">Predominantly expressed in flowers, and moderately expressed in roots, stems and young leaves.</text>
</comment>
<comment type="PTM">
    <text evidence="1">O-glycosylated on the hydroxyproline residues.</text>
</comment>
<comment type="similarity">
    <text evidence="6">Belongs to the lysine-rich AGP family.</text>
</comment>
<comment type="sequence caution" evidence="6">
    <conflict type="frameshift">
        <sequence resource="EMBL-CDS" id="AAM16184"/>
    </conflict>
</comment>
<comment type="sequence caution" evidence="6">
    <conflict type="erroneous gene model prediction">
        <sequence resource="EMBL-CDS" id="CAB38212"/>
    </conflict>
</comment>
<comment type="sequence caution" evidence="6">
    <conflict type="erroneous gene model prediction">
        <sequence resource="EMBL-CDS" id="CAB80410"/>
    </conflict>
</comment>
<dbReference type="EMBL" id="AF305940">
    <property type="protein sequence ID" value="AAG41964.1"/>
    <property type="molecule type" value="mRNA"/>
</dbReference>
<dbReference type="EMBL" id="AL035601">
    <property type="protein sequence ID" value="CAB38212.1"/>
    <property type="status" value="ALT_SEQ"/>
    <property type="molecule type" value="Genomic_DNA"/>
</dbReference>
<dbReference type="EMBL" id="AL161591">
    <property type="protein sequence ID" value="CAB80410.1"/>
    <property type="status" value="ALT_SEQ"/>
    <property type="molecule type" value="Genomic_DNA"/>
</dbReference>
<dbReference type="EMBL" id="CP002687">
    <property type="protein sequence ID" value="AEE86796.1"/>
    <property type="molecule type" value="Genomic_DNA"/>
</dbReference>
<dbReference type="EMBL" id="AF411780">
    <property type="protein sequence ID" value="AAL06470.1"/>
    <property type="status" value="ALT_SEQ"/>
    <property type="molecule type" value="mRNA"/>
</dbReference>
<dbReference type="EMBL" id="AY094028">
    <property type="protein sequence ID" value="AAM16184.1"/>
    <property type="status" value="ALT_SEQ"/>
    <property type="molecule type" value="mRNA"/>
</dbReference>
<dbReference type="PIR" id="T04739">
    <property type="entry name" value="T04739"/>
</dbReference>
<dbReference type="RefSeq" id="NP_568027.1">
    <property type="nucleotide sequence ID" value="NM_119909.3"/>
</dbReference>
<dbReference type="BioGRID" id="15181">
    <property type="interactions" value="1"/>
</dbReference>
<dbReference type="IntAct" id="Q9FPR2">
    <property type="interactions" value="1"/>
</dbReference>
<dbReference type="STRING" id="3702.Q9FPR2"/>
<dbReference type="GlyGen" id="Q9FPR2">
    <property type="glycosylation" value="1 site"/>
</dbReference>
<dbReference type="PaxDb" id="3702-AT4G37450.1"/>
<dbReference type="ProteomicsDB" id="244698"/>
<dbReference type="EnsemblPlants" id="AT4G37450.1">
    <property type="protein sequence ID" value="AT4G37450.1"/>
    <property type="gene ID" value="AT4G37450"/>
</dbReference>
<dbReference type="GeneID" id="829900"/>
<dbReference type="Gramene" id="AT4G37450.1">
    <property type="protein sequence ID" value="AT4G37450.1"/>
    <property type="gene ID" value="AT4G37450"/>
</dbReference>
<dbReference type="KEGG" id="ath:AT4G37450"/>
<dbReference type="Araport" id="AT4G37450"/>
<dbReference type="TAIR" id="AT4G37450">
    <property type="gene designation" value="AGP18"/>
</dbReference>
<dbReference type="eggNOG" id="ENOG502S14T">
    <property type="taxonomic scope" value="Eukaryota"/>
</dbReference>
<dbReference type="HOGENOM" id="CLU_088398_0_0_1"/>
<dbReference type="InParanoid" id="Q9FPR2"/>
<dbReference type="OMA" id="SWMAVEN"/>
<dbReference type="PRO" id="PR:Q9FPR2"/>
<dbReference type="Proteomes" id="UP000006548">
    <property type="component" value="Chromosome 4"/>
</dbReference>
<dbReference type="ExpressionAtlas" id="Q9FPR2">
    <property type="expression patterns" value="baseline and differential"/>
</dbReference>
<dbReference type="GO" id="GO:0005886">
    <property type="term" value="C:plasma membrane"/>
    <property type="evidence" value="ECO:0000314"/>
    <property type="project" value="TAIR"/>
</dbReference>
<dbReference type="GO" id="GO:0098552">
    <property type="term" value="C:side of membrane"/>
    <property type="evidence" value="ECO:0007669"/>
    <property type="project" value="UniProtKB-KW"/>
</dbReference>
<dbReference type="GO" id="GO:0009554">
    <property type="term" value="P:megasporogenesis"/>
    <property type="evidence" value="ECO:0000315"/>
    <property type="project" value="TAIR"/>
</dbReference>
<dbReference type="InterPro" id="IPR044981">
    <property type="entry name" value="AGP9/17/18"/>
</dbReference>
<dbReference type="PANTHER" id="PTHR37209">
    <property type="entry name" value="LYSINE-RICH ARABINOGALACTAN PROTEIN 17-RELATED"/>
    <property type="match status" value="1"/>
</dbReference>
<dbReference type="PANTHER" id="PTHR37209:SF13">
    <property type="entry name" value="LYSINE-RICH ARABINOGALACTAN PROTEIN 18"/>
    <property type="match status" value="1"/>
</dbReference>
<evidence type="ECO:0000250" key="1"/>
<evidence type="ECO:0000255" key="2"/>
<evidence type="ECO:0000256" key="3">
    <source>
        <dbReference type="SAM" id="MobiDB-lite"/>
    </source>
</evidence>
<evidence type="ECO:0000269" key="4">
    <source>
    </source>
</evidence>
<evidence type="ECO:0000269" key="5">
    <source>
    </source>
</evidence>
<evidence type="ECO:0000305" key="6"/>
<reference key="1">
    <citation type="journal article" date="2001" name="Protoplasma">
        <title>NaAGP4 is an arabinogalactan protein whose expression is suppressed by wounding and fungal infection in Nicotiana alata.</title>
        <authorList>
            <person name="Gilson P.R."/>
            <person name="Gaspar Y.M."/>
            <person name="Oxley D."/>
            <person name="Youl J.J."/>
            <person name="Bacic A."/>
        </authorList>
    </citation>
    <scope>NUCLEOTIDE SEQUENCE [MRNA]</scope>
</reference>
<reference key="2">
    <citation type="journal article" date="1999" name="Nature">
        <title>Sequence and analysis of chromosome 4 of the plant Arabidopsis thaliana.</title>
        <authorList>
            <person name="Mayer K.F.X."/>
            <person name="Schueller C."/>
            <person name="Wambutt R."/>
            <person name="Murphy G."/>
            <person name="Volckaert G."/>
            <person name="Pohl T."/>
            <person name="Duesterhoeft A."/>
            <person name="Stiekema W."/>
            <person name="Entian K.-D."/>
            <person name="Terryn N."/>
            <person name="Harris B."/>
            <person name="Ansorge W."/>
            <person name="Brandt P."/>
            <person name="Grivell L.A."/>
            <person name="Rieger M."/>
            <person name="Weichselgartner M."/>
            <person name="de Simone V."/>
            <person name="Obermaier B."/>
            <person name="Mache R."/>
            <person name="Mueller M."/>
            <person name="Kreis M."/>
            <person name="Delseny M."/>
            <person name="Puigdomenech P."/>
            <person name="Watson M."/>
            <person name="Schmidtheini T."/>
            <person name="Reichert B."/>
            <person name="Portetelle D."/>
            <person name="Perez-Alonso M."/>
            <person name="Boutry M."/>
            <person name="Bancroft I."/>
            <person name="Vos P."/>
            <person name="Hoheisel J."/>
            <person name="Zimmermann W."/>
            <person name="Wedler H."/>
            <person name="Ridley P."/>
            <person name="Langham S.-A."/>
            <person name="McCullagh B."/>
            <person name="Bilham L."/>
            <person name="Robben J."/>
            <person name="van der Schueren J."/>
            <person name="Grymonprez B."/>
            <person name="Chuang Y.-J."/>
            <person name="Vandenbussche F."/>
            <person name="Braeken M."/>
            <person name="Weltjens I."/>
            <person name="Voet M."/>
            <person name="Bastiaens I."/>
            <person name="Aert R."/>
            <person name="Defoor E."/>
            <person name="Weitzenegger T."/>
            <person name="Bothe G."/>
            <person name="Ramsperger U."/>
            <person name="Hilbert H."/>
            <person name="Braun M."/>
            <person name="Holzer E."/>
            <person name="Brandt A."/>
            <person name="Peters S."/>
            <person name="van Staveren M."/>
            <person name="Dirkse W."/>
            <person name="Mooijman P."/>
            <person name="Klein Lankhorst R."/>
            <person name="Rose M."/>
            <person name="Hauf J."/>
            <person name="Koetter P."/>
            <person name="Berneiser S."/>
            <person name="Hempel S."/>
            <person name="Feldpausch M."/>
            <person name="Lamberth S."/>
            <person name="Van den Daele H."/>
            <person name="De Keyser A."/>
            <person name="Buysshaert C."/>
            <person name="Gielen J."/>
            <person name="Villarroel R."/>
            <person name="De Clercq R."/>
            <person name="van Montagu M."/>
            <person name="Rogers J."/>
            <person name="Cronin A."/>
            <person name="Quail M.A."/>
            <person name="Bray-Allen S."/>
            <person name="Clark L."/>
            <person name="Doggett J."/>
            <person name="Hall S."/>
            <person name="Kay M."/>
            <person name="Lennard N."/>
            <person name="McLay K."/>
            <person name="Mayes R."/>
            <person name="Pettett A."/>
            <person name="Rajandream M.A."/>
            <person name="Lyne M."/>
            <person name="Benes V."/>
            <person name="Rechmann S."/>
            <person name="Borkova D."/>
            <person name="Bloecker H."/>
            <person name="Scharfe M."/>
            <person name="Grimm M."/>
            <person name="Loehnert T.-H."/>
            <person name="Dose S."/>
            <person name="de Haan M."/>
            <person name="Maarse A.C."/>
            <person name="Schaefer M."/>
            <person name="Mueller-Auer S."/>
            <person name="Gabel C."/>
            <person name="Fuchs M."/>
            <person name="Fartmann B."/>
            <person name="Granderath K."/>
            <person name="Dauner D."/>
            <person name="Herzl A."/>
            <person name="Neumann S."/>
            <person name="Argiriou A."/>
            <person name="Vitale D."/>
            <person name="Liguori R."/>
            <person name="Piravandi E."/>
            <person name="Massenet O."/>
            <person name="Quigley F."/>
            <person name="Clabauld G."/>
            <person name="Muendlein A."/>
            <person name="Felber R."/>
            <person name="Schnabl S."/>
            <person name="Hiller R."/>
            <person name="Schmidt W."/>
            <person name="Lecharny A."/>
            <person name="Aubourg S."/>
            <person name="Chefdor F."/>
            <person name="Cooke R."/>
            <person name="Berger C."/>
            <person name="Monfort A."/>
            <person name="Casacuberta E."/>
            <person name="Gibbons T."/>
            <person name="Weber N."/>
            <person name="Vandenbol M."/>
            <person name="Bargues M."/>
            <person name="Terol J."/>
            <person name="Torres A."/>
            <person name="Perez-Perez A."/>
            <person name="Purnelle B."/>
            <person name="Bent E."/>
            <person name="Johnson S."/>
            <person name="Tacon D."/>
            <person name="Jesse T."/>
            <person name="Heijnen L."/>
            <person name="Schwarz S."/>
            <person name="Scholler P."/>
            <person name="Heber S."/>
            <person name="Francs P."/>
            <person name="Bielke C."/>
            <person name="Frishman D."/>
            <person name="Haase D."/>
            <person name="Lemcke K."/>
            <person name="Mewes H.-W."/>
            <person name="Stocker S."/>
            <person name="Zaccaria P."/>
            <person name="Bevan M."/>
            <person name="Wilson R.K."/>
            <person name="de la Bastide M."/>
            <person name="Habermann K."/>
            <person name="Parnell L."/>
            <person name="Dedhia N."/>
            <person name="Gnoj L."/>
            <person name="Schutz K."/>
            <person name="Huang E."/>
            <person name="Spiegel L."/>
            <person name="Sekhon M."/>
            <person name="Murray J."/>
            <person name="Sheet P."/>
            <person name="Cordes M."/>
            <person name="Abu-Threideh J."/>
            <person name="Stoneking T."/>
            <person name="Kalicki J."/>
            <person name="Graves T."/>
            <person name="Harmon G."/>
            <person name="Edwards J."/>
            <person name="Latreille P."/>
            <person name="Courtney L."/>
            <person name="Cloud J."/>
            <person name="Abbott A."/>
            <person name="Scott K."/>
            <person name="Johnson D."/>
            <person name="Minx P."/>
            <person name="Bentley D."/>
            <person name="Fulton B."/>
            <person name="Miller N."/>
            <person name="Greco T."/>
            <person name="Kemp K."/>
            <person name="Kramer J."/>
            <person name="Fulton L."/>
            <person name="Mardis E."/>
            <person name="Dante M."/>
            <person name="Pepin K."/>
            <person name="Hillier L.W."/>
            <person name="Nelson J."/>
            <person name="Spieth J."/>
            <person name="Ryan E."/>
            <person name="Andrews S."/>
            <person name="Geisel C."/>
            <person name="Layman D."/>
            <person name="Du H."/>
            <person name="Ali J."/>
            <person name="Berghoff A."/>
            <person name="Jones K."/>
            <person name="Drone K."/>
            <person name="Cotton M."/>
            <person name="Joshu C."/>
            <person name="Antonoiu B."/>
            <person name="Zidanic M."/>
            <person name="Strong C."/>
            <person name="Sun H."/>
            <person name="Lamar B."/>
            <person name="Yordan C."/>
            <person name="Ma P."/>
            <person name="Zhong J."/>
            <person name="Preston R."/>
            <person name="Vil D."/>
            <person name="Shekher M."/>
            <person name="Matero A."/>
            <person name="Shah R."/>
            <person name="Swaby I.K."/>
            <person name="O'Shaughnessy A."/>
            <person name="Rodriguez M."/>
            <person name="Hoffman J."/>
            <person name="Till S."/>
            <person name="Granat S."/>
            <person name="Shohdy N."/>
            <person name="Hasegawa A."/>
            <person name="Hameed A."/>
            <person name="Lodhi M."/>
            <person name="Johnson A."/>
            <person name="Chen E."/>
            <person name="Marra M.A."/>
            <person name="Martienssen R."/>
            <person name="McCombie W.R."/>
        </authorList>
    </citation>
    <scope>NUCLEOTIDE SEQUENCE [LARGE SCALE GENOMIC DNA]</scope>
    <source>
        <strain>cv. Columbia</strain>
    </source>
</reference>
<reference key="3">
    <citation type="journal article" date="2017" name="Plant J.">
        <title>Araport11: a complete reannotation of the Arabidopsis thaliana reference genome.</title>
        <authorList>
            <person name="Cheng C.Y."/>
            <person name="Krishnakumar V."/>
            <person name="Chan A.P."/>
            <person name="Thibaud-Nissen F."/>
            <person name="Schobel S."/>
            <person name="Town C.D."/>
        </authorList>
    </citation>
    <scope>GENOME REANNOTATION</scope>
    <source>
        <strain>cv. Columbia</strain>
    </source>
</reference>
<reference key="4">
    <citation type="journal article" date="2003" name="Science">
        <title>Empirical analysis of transcriptional activity in the Arabidopsis genome.</title>
        <authorList>
            <person name="Yamada K."/>
            <person name="Lim J."/>
            <person name="Dale J.M."/>
            <person name="Chen H."/>
            <person name="Shinn P."/>
            <person name="Palm C.J."/>
            <person name="Southwick A.M."/>
            <person name="Wu H.C."/>
            <person name="Kim C.J."/>
            <person name="Nguyen M."/>
            <person name="Pham P.K."/>
            <person name="Cheuk R.F."/>
            <person name="Karlin-Newmann G."/>
            <person name="Liu S.X."/>
            <person name="Lam B."/>
            <person name="Sakano H."/>
            <person name="Wu T."/>
            <person name="Yu G."/>
            <person name="Miranda M."/>
            <person name="Quach H.L."/>
            <person name="Tripp M."/>
            <person name="Chang C.H."/>
            <person name="Lee J.M."/>
            <person name="Toriumi M.J."/>
            <person name="Chan M.M."/>
            <person name="Tang C.C."/>
            <person name="Onodera C.S."/>
            <person name="Deng J.M."/>
            <person name="Akiyama K."/>
            <person name="Ansari Y."/>
            <person name="Arakawa T."/>
            <person name="Banh J."/>
            <person name="Banno F."/>
            <person name="Bowser L."/>
            <person name="Brooks S.Y."/>
            <person name="Carninci P."/>
            <person name="Chao Q."/>
            <person name="Choy N."/>
            <person name="Enju A."/>
            <person name="Goldsmith A.D."/>
            <person name="Gurjal M."/>
            <person name="Hansen N.F."/>
            <person name="Hayashizaki Y."/>
            <person name="Johnson-Hopson C."/>
            <person name="Hsuan V.W."/>
            <person name="Iida K."/>
            <person name="Karnes M."/>
            <person name="Khan S."/>
            <person name="Koesema E."/>
            <person name="Ishida J."/>
            <person name="Jiang P.X."/>
            <person name="Jones T."/>
            <person name="Kawai J."/>
            <person name="Kamiya A."/>
            <person name="Meyers C."/>
            <person name="Nakajima M."/>
            <person name="Narusaka M."/>
            <person name="Seki M."/>
            <person name="Sakurai T."/>
            <person name="Satou M."/>
            <person name="Tamse R."/>
            <person name="Vaysberg M."/>
            <person name="Wallender E.K."/>
            <person name="Wong C."/>
            <person name="Yamamura Y."/>
            <person name="Yuan S."/>
            <person name="Shinozaki K."/>
            <person name="Davis R.W."/>
            <person name="Theologis A."/>
            <person name="Ecker J.R."/>
        </authorList>
    </citation>
    <scope>NUCLEOTIDE SEQUENCE [LARGE SCALE MRNA]</scope>
    <source>
        <strain>cv. Columbia</strain>
    </source>
</reference>
<reference key="5">
    <citation type="journal article" date="2002" name="Plant Physiol.">
        <title>Using genomic resources to guide research directions. The arabinogalactan protein gene family as a test case.</title>
        <authorList>
            <person name="Schultz C.J."/>
            <person name="Rumsewicz M.P."/>
            <person name="Johnson K.L."/>
            <person name="Jones B.J."/>
            <person name="Gaspar Y.M."/>
            <person name="Bacic A."/>
        </authorList>
    </citation>
    <scope>GENE FAMILY</scope>
    <scope>NOMENCLATURE</scope>
</reference>
<reference key="6">
    <citation type="journal article" date="2004" name="Plant Physiol.">
        <title>Characterization of the Arabidopsis lysine-rich arabinogalactan-protein AtAGP17 mutant (rat1) that results in a decreased efficiency of agrobacterium transformation.</title>
        <authorList>
            <person name="Gaspar Y.M."/>
            <person name="Nam J."/>
            <person name="Schultz C.J."/>
            <person name="Lee L.-Y."/>
            <person name="Gilson P.R."/>
            <person name="Gelvin S.B."/>
            <person name="Bacic A."/>
        </authorList>
    </citation>
    <scope>TISSUE SPECIFICITY</scope>
</reference>
<reference key="7">
    <citation type="journal article" date="2005" name="Plant Cell Physiol.">
        <title>The lysine-rich arabinogalactan-protein subfamily in Arabidopsis: gene expression, glycoprotein purification and biochemical characterization.</title>
        <authorList>
            <person name="Sun W."/>
            <person name="Xu J."/>
            <person name="Yang J."/>
            <person name="Kieliszewski M.J."/>
            <person name="Showalter A.M."/>
        </authorList>
    </citation>
    <scope>TISSUE SPECIFICITY</scope>
</reference>
<gene>
    <name type="primary">AGP18</name>
    <name type="ordered locus">At4g37450</name>
    <name type="ORF">F6G17.100</name>
</gene>
<sequence length="209" mass="20489">MDRNFLLTVTLICIVVAGVGGQSPISSPTKSPTTPSAPTTSPTKSPAVTSPTTAPAKTPTASASSPVESPKSPAPVSESSPPPTPVPESSPPVPAPMVSSPVSSPPVPAPVADSPPAPVAAPVADVPAPAPSKHKKTTKKSKKHQAAPAPAPELLGPPAPPTESPGPNSDAFSPGPSADDQSGAASTRVLRNVAVGAVATAWAVLVMAF</sequence>
<organism>
    <name type="scientific">Arabidopsis thaliana</name>
    <name type="common">Mouse-ear cress</name>
    <dbReference type="NCBI Taxonomy" id="3702"/>
    <lineage>
        <taxon>Eukaryota</taxon>
        <taxon>Viridiplantae</taxon>
        <taxon>Streptophyta</taxon>
        <taxon>Embryophyta</taxon>
        <taxon>Tracheophyta</taxon>
        <taxon>Spermatophyta</taxon>
        <taxon>Magnoliopsida</taxon>
        <taxon>eudicotyledons</taxon>
        <taxon>Gunneridae</taxon>
        <taxon>Pentapetalae</taxon>
        <taxon>rosids</taxon>
        <taxon>malvids</taxon>
        <taxon>Brassicales</taxon>
        <taxon>Brassicaceae</taxon>
        <taxon>Camelineae</taxon>
        <taxon>Arabidopsis</taxon>
    </lineage>
</organism>
<name>AGP18_ARATH</name>
<proteinExistence type="evidence at transcript level"/>
<protein>
    <recommendedName>
        <fullName>Lysine-rich arabinogalactan protein 18</fullName>
        <shortName>Lys-rich AGP 18</shortName>
    </recommendedName>
</protein>
<accession>Q9FPR2</accession>
<accession>Q945Q3</accession>
<accession>Q9SZU5</accession>
<keyword id="KW-1003">Cell membrane</keyword>
<keyword id="KW-0325">Glycoprotein</keyword>
<keyword id="KW-0336">GPI-anchor</keyword>
<keyword id="KW-0449">Lipoprotein</keyword>
<keyword id="KW-0472">Membrane</keyword>
<keyword id="KW-0654">Proteoglycan</keyword>
<keyword id="KW-1185">Reference proteome</keyword>
<keyword id="KW-0732">Signal</keyword>
<feature type="signal peptide" evidence="2">
    <location>
        <begin position="1"/>
        <end position="21"/>
    </location>
</feature>
<feature type="chain" id="PRO_0000269033" description="Lysine-rich arabinogalactan protein 18">
    <location>
        <begin position="22"/>
        <end position="183"/>
    </location>
</feature>
<feature type="propeptide" id="PRO_0000269034" description="Removed in mature form" evidence="2">
    <location>
        <begin position="184"/>
        <end position="209"/>
    </location>
</feature>
<feature type="region of interest" description="Disordered" evidence="3">
    <location>
        <begin position="21"/>
        <end position="185"/>
    </location>
</feature>
<feature type="compositionally biased region" description="Low complexity" evidence="3">
    <location>
        <begin position="23"/>
        <end position="79"/>
    </location>
</feature>
<feature type="compositionally biased region" description="Pro residues" evidence="3">
    <location>
        <begin position="80"/>
        <end position="95"/>
    </location>
</feature>
<feature type="compositionally biased region" description="Pro residues" evidence="3">
    <location>
        <begin position="103"/>
        <end position="119"/>
    </location>
</feature>
<feature type="compositionally biased region" description="Basic residues" evidence="3">
    <location>
        <begin position="132"/>
        <end position="145"/>
    </location>
</feature>
<feature type="compositionally biased region" description="Pro residues" evidence="3">
    <location>
        <begin position="149"/>
        <end position="164"/>
    </location>
</feature>
<feature type="lipid moiety-binding region" description="GPI-anchor amidated glycine" evidence="2">
    <location>
        <position position="183"/>
    </location>
</feature>